<comment type="function">
    <text evidence="1">A GTPase-activating protein (GAP) that modifies Der/EngA GTPase function. May play a role in ribosome biogenesis.</text>
</comment>
<comment type="subunit">
    <text evidence="1">Interacts with Der.</text>
</comment>
<comment type="similarity">
    <text evidence="1">Belongs to the YihI family.</text>
</comment>
<reference key="1">
    <citation type="journal article" date="2005" name="J. Bacteriol.">
        <title>Genomic sequence of an otitis media isolate of nontypeable Haemophilus influenzae: comparative study with H. influenzae serotype d, strain KW20.</title>
        <authorList>
            <person name="Harrison A."/>
            <person name="Dyer D.W."/>
            <person name="Gillaspy A."/>
            <person name="Ray W.C."/>
            <person name="Mungur R."/>
            <person name="Carson M.B."/>
            <person name="Zhong H."/>
            <person name="Gipson J."/>
            <person name="Gipson M."/>
            <person name="Johnson L.S."/>
            <person name="Lewis L."/>
            <person name="Bakaletz L.O."/>
            <person name="Munson R.S. Jr."/>
        </authorList>
    </citation>
    <scope>NUCLEOTIDE SEQUENCE [LARGE SCALE GENOMIC DNA]</scope>
    <source>
        <strain>86-028NP</strain>
    </source>
</reference>
<keyword id="KW-0343">GTPase activation</keyword>
<keyword id="KW-0690">Ribosome biogenesis</keyword>
<dbReference type="EMBL" id="CP000057">
    <property type="protein sequence ID" value="AAX87775.1"/>
    <property type="molecule type" value="Genomic_DNA"/>
</dbReference>
<dbReference type="RefSeq" id="WP_005648548.1">
    <property type="nucleotide sequence ID" value="NC_007146.2"/>
</dbReference>
<dbReference type="SMR" id="Q4QMH2"/>
<dbReference type="GeneID" id="93219762"/>
<dbReference type="KEGG" id="hit:NTHI0881"/>
<dbReference type="HOGENOM" id="CLU_094104_2_0_6"/>
<dbReference type="Proteomes" id="UP000002525">
    <property type="component" value="Chromosome"/>
</dbReference>
<dbReference type="GO" id="GO:0005096">
    <property type="term" value="F:GTPase activator activity"/>
    <property type="evidence" value="ECO:0007669"/>
    <property type="project" value="UniProtKB-KW"/>
</dbReference>
<dbReference type="GO" id="GO:0042254">
    <property type="term" value="P:ribosome biogenesis"/>
    <property type="evidence" value="ECO:0007669"/>
    <property type="project" value="UniProtKB-KW"/>
</dbReference>
<dbReference type="HAMAP" id="MF_01058">
    <property type="entry name" value="GAP_YihI"/>
    <property type="match status" value="1"/>
</dbReference>
<dbReference type="InterPro" id="IPR007336">
    <property type="entry name" value="YihI"/>
</dbReference>
<dbReference type="NCBIfam" id="NF003560">
    <property type="entry name" value="PRK05244.1-1"/>
    <property type="match status" value="1"/>
</dbReference>
<dbReference type="Pfam" id="PF04220">
    <property type="entry name" value="YihI"/>
    <property type="match status" value="1"/>
</dbReference>
<accession>Q4QMH2</accession>
<gene>
    <name evidence="1" type="primary">yihI</name>
    <name type="ordered locus">NTHI0881</name>
</gene>
<sequence length="186" mass="21591">MARKKKTRRITDIMPIRKADKKIDITKARSGKKLTRYELDAKAREDKKKRKHKGLASGSRHSAVEEKANKLQNEIKDPKIGSKKKIPLVVEFVNKPEKGQVIPVIKQVKKQDPMKELENLENNEILNELLDALDAGKTISKSDQQFVDECLDRISELMEELGIEDEDESEDDLYRTFERMDINQFR</sequence>
<feature type="chain" id="PRO_1000064425" description="Der GTPase-activating protein YihI">
    <location>
        <begin position="1"/>
        <end position="186"/>
    </location>
</feature>
<feature type="region of interest" description="Disordered" evidence="2">
    <location>
        <begin position="39"/>
        <end position="77"/>
    </location>
</feature>
<feature type="compositionally biased region" description="Basic and acidic residues" evidence="2">
    <location>
        <begin position="62"/>
        <end position="77"/>
    </location>
</feature>
<evidence type="ECO:0000255" key="1">
    <source>
        <dbReference type="HAMAP-Rule" id="MF_01058"/>
    </source>
</evidence>
<evidence type="ECO:0000256" key="2">
    <source>
        <dbReference type="SAM" id="MobiDB-lite"/>
    </source>
</evidence>
<proteinExistence type="inferred from homology"/>
<protein>
    <recommendedName>
        <fullName evidence="1">Der GTPase-activating protein YihI</fullName>
    </recommendedName>
</protein>
<name>YIHI_HAEI8</name>
<organism>
    <name type="scientific">Haemophilus influenzae (strain 86-028NP)</name>
    <dbReference type="NCBI Taxonomy" id="281310"/>
    <lineage>
        <taxon>Bacteria</taxon>
        <taxon>Pseudomonadati</taxon>
        <taxon>Pseudomonadota</taxon>
        <taxon>Gammaproteobacteria</taxon>
        <taxon>Pasteurellales</taxon>
        <taxon>Pasteurellaceae</taxon>
        <taxon>Haemophilus</taxon>
    </lineage>
</organism>